<proteinExistence type="evidence at protein level"/>
<sequence>MATTEMNDVQPVQSQVLLFGDLSLAHVEESLKRLLHVKTNPLLAAFFQRVNHQLRRLLDGLPLEQQDFFPRFTTLIDLVSRLGETSGTPVLAFFLLSVQQVAQSIVYFSHGSRIFPPSSACIIGPCTGGFAAAALASSQNLVDLVNNGAEASILAFRTALVSFLISRSLSNSPQTEGSTSWSVAVSSRGEQTVEDLAQEYMAAKTPLRHSSLWKSAVTASLTITLSGQPSILQGFLETYSEQLRYKYLDIDSPYHAAHLFSETDVEQIVSHLAGSDTADQKPRLPVLSSATGQLISASTFHGLLHTVVQETLLKPVCWDLILDSCQSWLTQGGAQECTILPFSSNAGTMIASALTKEKEIEVTVADATGSGLLDEKPTGRFEHSKIAIVGYSGRFPSAASNDAFWELLRSGQDVHREVPRDRFEWEKYYDPTGKKKNTSRVKYGCWIDEPGVFDTRFFNMSPKEAENTDPAQRLAITTTYEAMEMAGMVRNRTASTQQDRIGVFFGTTSDDWREVNSGQDVGTYFIPGGNRAFVPGRISYFFRFSGPSLSIDTACSSSFAAIQAACSYLWRGECDAAIAGGTNVLTSPDNFAGLDRAHFLSTTGNCNAFDDEASGYCRSDAVGSVVLKRLEDAEADNDPIFGVILGTNTNHCGQTESITRPHEGDQISVFKNIIRHSGIDPTDVSYIEMHGTGTQAGDATEMNSVLSAFVPKYKRTEMSPQRPLFIGSAKANIGHAESASGVSSLIKVMEMMKHNEIPPHCGIKNRINHNYPLDLAQRGVNIAFEVKPWLRENSNGGKRRVFLNNFSAAGGNTAMLIEDAPLPKSIAHLTDPRSTHLVSVSAKSPKSLLANIKSILASLDMRATPPSVAALSYTTTARRTQHNYRVIVSGSDLDSVKSSLRSWTQENESTISDFKPIPSSAKKQARVAFAFTGQGTLYTAIGAQLFAVNETFKINIHKLNRLAEIQGFPSFIGLIDGTITAEELPNVSPVVTQLALVCVQVALYELWSSWGLNPAAVIGHSLGEYPALYAAGVLSSADMIYLVATRATLLEKLCTRGTHSMLAVKASEDVAEKLIRDATASPECEIACANQPAGHVIAGPVGKIDEVAQKAAESGVEVVKLNVPYAFHSPQVEPILVDFLESASQGVTYNAPTIPVLSPFHGRVVAAGETGVLNAEYLVAACRGQVNFKQALSSAGELTDADRTLWLEIGAHPACGGMVKGTIDSRVKTIASLRQNVDAYQTLTTGLKTLYLAGIDINWNEYHRHFPASHQMVKLPMYAWDLKNYWIQYKNDFLLYKGGDFPQQIAAAPTPVPVVRKYLSPCAQQIVEEFHDSQQSTMVVESDIFDPKLLPVLQGHLVNGAALCPSSMYADLAYTVADYLIRHCPTQIPDTTGLDVTNVKVSNPLIAKGNETTHLFRASVKADWPANRVSIDLFSVGANGKRTASHAKLDVVLYPGQQWLKEWKRNAHFITSRIKGLNAAIHSSSTETHLIKRGMAYKLFASLVDYKKEYQGMSEIVIDSHELEAVSTVQFQVGKEEFFLNPRWIDSLGGVAGFIMNANDGVCSKDQVFINHGWERMRIAEPFDEKKTYHAYNRMQLVENTTYAGDTYIMDGDRVIAIFEGVVFQGVPRRALDHLLPNAAAKSAAATKAPAKAPVAAVAPPRTPTKAAPQSRQAAPKQKRSPVSDVFNRILGLISEEVGVSLSDLVGDADFASLGVDSLLSLTITAKIRDEMGLDFPSSLFVDEPTVADLRTLLSNSDEDDTPSGDSSTYEDSESQITSPASSVGPETPGGGEFGSSESARVALVVRQAICEETQVAMEELKSFTCLSDIGVDSLLGLTLSSRLQDLLQVDIPGNMLMDFETVHDLEEEIYNVMGLEKPQKKASGPTQVPLAVPQPLAVPAVTSISSLPQATSILLSGSIKTAQTILFLFPDGSGSASSYAHVARAVAPSTFAVYGLNCPWRKTARDMTRLGITMSSMVAQYLPEVQRMIQKVRSEGNSTATIALGGWSAGGILAFEAIRQMGASTPISHLVLFDSPNPIGLQNPPQRMFDFFDGLGIFGPPPGKNGEKAKTPEWLLDHFNAFISILDDYEPSPLPNAPASLMIYAKDGVCKDPNGPQMDIRPDDPREMIWLLNNRTDFTADGWASIIGREKLSITVLDEVNHFSLMDPGPKMPEMGEAVAEFLGRN</sequence>
<reference key="1">
    <citation type="journal article" date="2016" name="J. Am. Chem. Soc.">
        <title>Phenalenone polyketide cyclization catalyzed by fungal polyketide synthase and flavin-dependent monooxygenase.</title>
        <authorList>
            <person name="Gao S.S."/>
            <person name="Duan A."/>
            <person name="Xu W."/>
            <person name="Yu P."/>
            <person name="Hang L."/>
            <person name="Houk K.N."/>
            <person name="Tang Y."/>
        </authorList>
    </citation>
    <scope>NUCLEOTIDE SEQUENCE [GENOMIC DNA]</scope>
    <scope>CATALYTIC ACTIVITY</scope>
    <scope>FUNCTION</scope>
    <scope>DISRUPTION PHENOTYPE</scope>
    <scope>PATHWAY</scope>
    <source>
        <strain>ATCC 10118 / CBS 336.48 / NBRC 31747 / NRRL 1040</strain>
    </source>
</reference>
<reference key="2">
    <citation type="journal article" date="2017" name="J. Am. Chem. Soc.">
        <title>Enzyme-catalyzed intramolecular enantioselective hydroalkoxylation.</title>
        <authorList>
            <person name="Gao S.S."/>
            <person name="Garcia-Borras M."/>
            <person name="Barber J.S."/>
            <person name="Hai Y."/>
            <person name="Duan A."/>
            <person name="Garg N.K."/>
            <person name="Houk K.N."/>
            <person name="Tang Y."/>
        </authorList>
    </citation>
    <scope>FUNCTION</scope>
    <scope>CATALYTIC ACTIVITY</scope>
    <scope>PATHWAY</scope>
</reference>
<name>PHNA_PENHR</name>
<evidence type="ECO:0000250" key="1">
    <source>
        <dbReference type="UniProtKB" id="Q03149"/>
    </source>
</evidence>
<evidence type="ECO:0000250" key="2">
    <source>
        <dbReference type="UniProtKB" id="Q5ATJ7"/>
    </source>
</evidence>
<evidence type="ECO:0000250" key="3">
    <source>
        <dbReference type="UniProtKB" id="Q5B0D0"/>
    </source>
</evidence>
<evidence type="ECO:0000255" key="4"/>
<evidence type="ECO:0000255" key="5">
    <source>
        <dbReference type="PROSITE-ProRule" id="PRU00258"/>
    </source>
</evidence>
<evidence type="ECO:0000255" key="6">
    <source>
        <dbReference type="PROSITE-ProRule" id="PRU01348"/>
    </source>
</evidence>
<evidence type="ECO:0000255" key="7">
    <source>
        <dbReference type="PROSITE-ProRule" id="PRU01363"/>
    </source>
</evidence>
<evidence type="ECO:0000255" key="8">
    <source>
        <dbReference type="PROSITE-ProRule" id="PRU10022"/>
    </source>
</evidence>
<evidence type="ECO:0000256" key="9">
    <source>
        <dbReference type="SAM" id="MobiDB-lite"/>
    </source>
</evidence>
<evidence type="ECO:0000269" key="10">
    <source>
    </source>
</evidence>
<evidence type="ECO:0000269" key="11">
    <source>
    </source>
</evidence>
<evidence type="ECO:0000303" key="12">
    <source>
    </source>
</evidence>
<evidence type="ECO:0000305" key="13">
    <source>
    </source>
</evidence>
<keyword id="KW-0511">Multifunctional enzyme</keyword>
<keyword id="KW-0596">Phosphopantetheine</keyword>
<keyword id="KW-0597">Phosphoprotein</keyword>
<keyword id="KW-0677">Repeat</keyword>
<keyword id="KW-0808">Transferase</keyword>
<accession>A0A142C799</accession>
<gene>
    <name evidence="12" type="primary">phnA</name>
</gene>
<organism>
    <name type="scientific">Penicillium herquei</name>
    <dbReference type="NCBI Taxonomy" id="69774"/>
    <lineage>
        <taxon>Eukaryota</taxon>
        <taxon>Fungi</taxon>
        <taxon>Dikarya</taxon>
        <taxon>Ascomycota</taxon>
        <taxon>Pezizomycotina</taxon>
        <taxon>Eurotiomycetes</taxon>
        <taxon>Eurotiomycetidae</taxon>
        <taxon>Eurotiales</taxon>
        <taxon>Aspergillaceae</taxon>
        <taxon>Penicillium</taxon>
    </lineage>
</organism>
<comment type="function">
    <text evidence="10 11">Non-reducing polyketide synthase; part of the gene cluster that mediates the biosynthesis of phenalenones such as herqueinone, compounds that have been reported to treat tumors, bacterial infections and/or mycoses, and rheumatic diseases (PubMed:26978228). The non-reducing polyketide synthase phnA synthesizes the heptaketide backbone and cyclizes it into the angular, hemiketal-containing naphtho-gamma-pyrone prephenalenone. The product template (PT) domain of phnA catalyzes only the C4-C9 aldol condensation, which is unprecedented among known PT domains (PubMed:26978228, PubMed:28240554). The transformation of prephenalenone to phenalenones requires an FAD-dependent monooxygenase phnB, which catalyzes the C2 aromatic hydroxylation of prephenalenone and ring opening of the gamma-pyrone ring simultaneously (PubMed:26978228, PubMed:28240554). Subsequent intramolecular deprotonation of C3 phenolic oxygen accelerates phenalenone ring closure to yield the tricyclic phenalenone core with a C2 hydroxylation (PubMed:26978228, PubMed:28240554). The prenyltransferase phnF further catalyzes reverse C-prenylation of phenalenone by direct electrophilic substitution at C6, or possibly via first a forward O-prenylation of a neighboring phenol in phenalenone, followed by a Claisen rearrangement (PubMed:28240554). The hydroalkoxylation enzyme phnH catalyzes the 5-exo-trig cyclization via acid catalysis after the spontaneous deprotonation of 7-OH, which leads to the formation of the dihydrobenzofuran atrovenetin (PubMed:28240554). Atrovenetin is further converted to deoxyherqueinone by the O-methyltransferase phnC which can methylate C2-OH to stabilize the northern portion of the phenalenone core (PubMed:28240554). Finally, the oxidoreductase phnG converts deoxyherqueinone to herqueinone via C6 hydroxylation (PubMed:28240554).</text>
</comment>
<comment type="catalytic activity">
    <reaction evidence="10 11">
        <text>6 malonyl-CoA + acetyl-CoA + 5 H(+) = 3,6,7,9-tetrahydroxy-3-methyl-2,3-dihydro-1H-naphtho[2,1-b]pyran-1-one + 6 CO2 + 7 CoA + H2O</text>
        <dbReference type="Rhea" id="RHEA:12060"/>
        <dbReference type="ChEBI" id="CHEBI:15377"/>
        <dbReference type="ChEBI" id="CHEBI:15378"/>
        <dbReference type="ChEBI" id="CHEBI:16526"/>
        <dbReference type="ChEBI" id="CHEBI:57287"/>
        <dbReference type="ChEBI" id="CHEBI:57288"/>
        <dbReference type="ChEBI" id="CHEBI:57384"/>
        <dbReference type="ChEBI" id="CHEBI:142802"/>
    </reaction>
    <physiologicalReaction direction="left-to-right" evidence="10 11">
        <dbReference type="Rhea" id="RHEA:12061"/>
    </physiologicalReaction>
</comment>
<comment type="pathway">
    <text evidence="10 11">Secondary metabolite biosynthesis.</text>
</comment>
<comment type="domain">
    <text evidence="3">Multidomain protein; including a starter unit:ACP transacylase (SAT) that selects the starter unit; a ketosynthase (KS) that catalyzes repeated decarboxylative condensation to elongate the polyketide backbone; a malonyl-CoA:ACP transacylase (MAT) that selects and transfers the extender unit malonyl-CoA; a product template (PT) domain that controls the immediate cyclization regioselectivity of the reactive polyketide backbone; and 2 acyl-carrier protein (ACP) domains that serve as the tethers of the growing and completed polyketide via their phosphopantetheinyl arm.</text>
</comment>
<comment type="domain">
    <text evidence="2">The release of the polyketide chain from the non-reducing polyketide synthase is mediated by the thioesterase (TE) domain localized at the C-ter of the protein.</text>
</comment>
<comment type="disruption phenotype">
    <text evidence="10">Completely abolishes the production of herqueinone.</text>
</comment>
<dbReference type="EC" id="2.3.1.-" evidence="10 11"/>
<dbReference type="EMBL" id="KU641626">
    <property type="protein sequence ID" value="AMP46751.1"/>
    <property type="molecule type" value="Genomic_DNA"/>
</dbReference>
<dbReference type="SMR" id="A0A142C799"/>
<dbReference type="ESTHER" id="penhr-phna">
    <property type="family name" value="Thioesterase"/>
</dbReference>
<dbReference type="GO" id="GO:0004315">
    <property type="term" value="F:3-oxoacyl-[acyl-carrier-protein] synthase activity"/>
    <property type="evidence" value="ECO:0007669"/>
    <property type="project" value="InterPro"/>
</dbReference>
<dbReference type="GO" id="GO:0004312">
    <property type="term" value="F:fatty acid synthase activity"/>
    <property type="evidence" value="ECO:0007669"/>
    <property type="project" value="TreeGrafter"/>
</dbReference>
<dbReference type="GO" id="GO:0031177">
    <property type="term" value="F:phosphopantetheine binding"/>
    <property type="evidence" value="ECO:0007669"/>
    <property type="project" value="InterPro"/>
</dbReference>
<dbReference type="GO" id="GO:0017000">
    <property type="term" value="P:antibiotic biosynthetic process"/>
    <property type="evidence" value="ECO:0007669"/>
    <property type="project" value="UniProtKB-ARBA"/>
</dbReference>
<dbReference type="GO" id="GO:0006633">
    <property type="term" value="P:fatty acid biosynthetic process"/>
    <property type="evidence" value="ECO:0007669"/>
    <property type="project" value="InterPro"/>
</dbReference>
<dbReference type="GO" id="GO:0030639">
    <property type="term" value="P:polyketide biosynthetic process"/>
    <property type="evidence" value="ECO:0007669"/>
    <property type="project" value="UniProtKB-ARBA"/>
</dbReference>
<dbReference type="CDD" id="cd00833">
    <property type="entry name" value="PKS"/>
    <property type="match status" value="1"/>
</dbReference>
<dbReference type="FunFam" id="1.10.1200.10:FF:000011">
    <property type="entry name" value="Sterigmatocystin biosynthesis polyketide synthase"/>
    <property type="match status" value="1"/>
</dbReference>
<dbReference type="FunFam" id="3.10.129.110:FF:000001">
    <property type="entry name" value="Sterigmatocystin biosynthesis polyketide synthase"/>
    <property type="match status" value="1"/>
</dbReference>
<dbReference type="Gene3D" id="3.30.70.3290">
    <property type="match status" value="1"/>
</dbReference>
<dbReference type="Gene3D" id="3.40.47.10">
    <property type="match status" value="1"/>
</dbReference>
<dbReference type="Gene3D" id="1.10.1200.10">
    <property type="entry name" value="ACP-like"/>
    <property type="match status" value="2"/>
</dbReference>
<dbReference type="Gene3D" id="3.40.50.1820">
    <property type="entry name" value="alpha/beta hydrolase"/>
    <property type="match status" value="1"/>
</dbReference>
<dbReference type="Gene3D" id="3.40.366.10">
    <property type="entry name" value="Malonyl-Coenzyme A Acyl Carrier Protein, domain 2"/>
    <property type="match status" value="2"/>
</dbReference>
<dbReference type="Gene3D" id="3.10.129.110">
    <property type="entry name" value="Polyketide synthase dehydratase"/>
    <property type="match status" value="1"/>
</dbReference>
<dbReference type="InterPro" id="IPR029058">
    <property type="entry name" value="AB_hydrolase_fold"/>
</dbReference>
<dbReference type="InterPro" id="IPR001227">
    <property type="entry name" value="Ac_transferase_dom_sf"/>
</dbReference>
<dbReference type="InterPro" id="IPR036736">
    <property type="entry name" value="ACP-like_sf"/>
</dbReference>
<dbReference type="InterPro" id="IPR014043">
    <property type="entry name" value="Acyl_transferase_dom"/>
</dbReference>
<dbReference type="InterPro" id="IPR016035">
    <property type="entry name" value="Acyl_Trfase/lysoPLipase"/>
</dbReference>
<dbReference type="InterPro" id="IPR018201">
    <property type="entry name" value="Ketoacyl_synth_AS"/>
</dbReference>
<dbReference type="InterPro" id="IPR014031">
    <property type="entry name" value="Ketoacyl_synth_C"/>
</dbReference>
<dbReference type="InterPro" id="IPR014030">
    <property type="entry name" value="Ketoacyl_synth_N"/>
</dbReference>
<dbReference type="InterPro" id="IPR016036">
    <property type="entry name" value="Malonyl_transacylase_ACP-bd"/>
</dbReference>
<dbReference type="InterPro" id="IPR020841">
    <property type="entry name" value="PKS_Beta-ketoAc_synthase_dom"/>
</dbReference>
<dbReference type="InterPro" id="IPR042104">
    <property type="entry name" value="PKS_dehydratase_sf"/>
</dbReference>
<dbReference type="InterPro" id="IPR049900">
    <property type="entry name" value="PKS_mFAS_DH"/>
</dbReference>
<dbReference type="InterPro" id="IPR050091">
    <property type="entry name" value="PKS_NRPS_Biosynth_Enz"/>
</dbReference>
<dbReference type="InterPro" id="IPR020806">
    <property type="entry name" value="PKS_PP-bd"/>
</dbReference>
<dbReference type="InterPro" id="IPR009081">
    <property type="entry name" value="PP-bd_ACP"/>
</dbReference>
<dbReference type="InterPro" id="IPR006162">
    <property type="entry name" value="Ppantetheine_attach_site"/>
</dbReference>
<dbReference type="InterPro" id="IPR030918">
    <property type="entry name" value="PT_fungal_PKS"/>
</dbReference>
<dbReference type="InterPro" id="IPR032088">
    <property type="entry name" value="SAT"/>
</dbReference>
<dbReference type="InterPro" id="IPR001031">
    <property type="entry name" value="Thioesterase"/>
</dbReference>
<dbReference type="InterPro" id="IPR016039">
    <property type="entry name" value="Thiolase-like"/>
</dbReference>
<dbReference type="NCBIfam" id="TIGR04532">
    <property type="entry name" value="PT_fungal_PKS"/>
    <property type="match status" value="1"/>
</dbReference>
<dbReference type="PANTHER" id="PTHR43775:SF45">
    <property type="entry name" value="CONIDIAL PIGMENT POLYKETIDE SYNTHASE ALB1"/>
    <property type="match status" value="1"/>
</dbReference>
<dbReference type="PANTHER" id="PTHR43775">
    <property type="entry name" value="FATTY ACID SYNTHASE"/>
    <property type="match status" value="1"/>
</dbReference>
<dbReference type="Pfam" id="PF00698">
    <property type="entry name" value="Acyl_transf_1"/>
    <property type="match status" value="1"/>
</dbReference>
<dbReference type="Pfam" id="PF00109">
    <property type="entry name" value="ketoacyl-synt"/>
    <property type="match status" value="1"/>
</dbReference>
<dbReference type="Pfam" id="PF02801">
    <property type="entry name" value="Ketoacyl-synt_C"/>
    <property type="match status" value="1"/>
</dbReference>
<dbReference type="Pfam" id="PF00550">
    <property type="entry name" value="PP-binding"/>
    <property type="match status" value="2"/>
</dbReference>
<dbReference type="Pfam" id="PF16073">
    <property type="entry name" value="SAT"/>
    <property type="match status" value="1"/>
</dbReference>
<dbReference type="Pfam" id="PF00975">
    <property type="entry name" value="Thioesterase"/>
    <property type="match status" value="1"/>
</dbReference>
<dbReference type="SMART" id="SM00827">
    <property type="entry name" value="PKS_AT"/>
    <property type="match status" value="1"/>
</dbReference>
<dbReference type="SMART" id="SM00825">
    <property type="entry name" value="PKS_KS"/>
    <property type="match status" value="1"/>
</dbReference>
<dbReference type="SMART" id="SM00823">
    <property type="entry name" value="PKS_PP"/>
    <property type="match status" value="2"/>
</dbReference>
<dbReference type="SUPFAM" id="SSF47336">
    <property type="entry name" value="ACP-like"/>
    <property type="match status" value="1"/>
</dbReference>
<dbReference type="SUPFAM" id="SSF53474">
    <property type="entry name" value="alpha/beta-Hydrolases"/>
    <property type="match status" value="1"/>
</dbReference>
<dbReference type="SUPFAM" id="SSF52151">
    <property type="entry name" value="FabD/lysophospholipase-like"/>
    <property type="match status" value="1"/>
</dbReference>
<dbReference type="SUPFAM" id="SSF55048">
    <property type="entry name" value="Probable ACP-binding domain of malonyl-CoA ACP transacylase"/>
    <property type="match status" value="1"/>
</dbReference>
<dbReference type="SUPFAM" id="SSF53901">
    <property type="entry name" value="Thiolase-like"/>
    <property type="match status" value="1"/>
</dbReference>
<dbReference type="PROSITE" id="PS50075">
    <property type="entry name" value="CARRIER"/>
    <property type="match status" value="2"/>
</dbReference>
<dbReference type="PROSITE" id="PS00606">
    <property type="entry name" value="KS3_1"/>
    <property type="match status" value="1"/>
</dbReference>
<dbReference type="PROSITE" id="PS52004">
    <property type="entry name" value="KS3_2"/>
    <property type="match status" value="1"/>
</dbReference>
<dbReference type="PROSITE" id="PS00012">
    <property type="entry name" value="PHOSPHOPANTETHEINE"/>
    <property type="match status" value="2"/>
</dbReference>
<dbReference type="PROSITE" id="PS52019">
    <property type="entry name" value="PKS_MFAS_DH"/>
    <property type="match status" value="1"/>
</dbReference>
<protein>
    <recommendedName>
        <fullName evidence="12">Non-reducing polyketide synthase phnA</fullName>
        <shortName evidence="12">NR-PKS phnA</shortName>
        <ecNumber evidence="10 11">2.3.1.-</ecNumber>
    </recommendedName>
    <alternativeName>
        <fullName evidence="12">Phenalenone biosynthesis cluster protein A</fullName>
    </alternativeName>
</protein>
<feature type="chain" id="PRO_0000446161" description="Non-reducing polyketide synthase phnA">
    <location>
        <begin position="1"/>
        <end position="2187"/>
    </location>
</feature>
<feature type="domain" description="Ketosynthase family 3 (KS3)" evidence="6 13">
    <location>
        <begin position="383"/>
        <end position="819"/>
    </location>
</feature>
<feature type="domain" description="PKS/mFAS DH" evidence="7">
    <location>
        <begin position="1324"/>
        <end position="1633"/>
    </location>
</feature>
<feature type="domain" description="Carrier 1" evidence="5">
    <location>
        <begin position="1684"/>
        <end position="1758"/>
    </location>
</feature>
<feature type="domain" description="Carrier 2" evidence="5">
    <location>
        <begin position="1796"/>
        <end position="1874"/>
    </location>
</feature>
<feature type="region of interest" description="N-terminal acylcarrier protein transacylase domain (SAT)" evidence="4 13">
    <location>
        <begin position="17"/>
        <end position="255"/>
    </location>
</feature>
<feature type="region of interest" description="Malonyl-CoA:ACP transacylase (MAT) domain" evidence="4 13">
    <location>
        <begin position="926"/>
        <end position="1226"/>
    </location>
</feature>
<feature type="region of interest" description="Product template (PT) domain" evidence="4 13">
    <location>
        <begin position="1321"/>
        <end position="1637"/>
    </location>
</feature>
<feature type="region of interest" description="N-terminal hotdog fold" evidence="7">
    <location>
        <begin position="1324"/>
        <end position="1458"/>
    </location>
</feature>
<feature type="region of interest" description="C-terminal hotdog fold" evidence="7">
    <location>
        <begin position="1486"/>
        <end position="1633"/>
    </location>
</feature>
<feature type="region of interest" description="Disordered" evidence="9">
    <location>
        <begin position="1652"/>
        <end position="1681"/>
    </location>
</feature>
<feature type="region of interest" description="Disordered" evidence="9">
    <location>
        <begin position="1754"/>
        <end position="1796"/>
    </location>
</feature>
<feature type="region of interest" description="Thioesterase (TE) domain" evidence="4 13">
    <location>
        <begin position="1906"/>
        <end position="2183"/>
    </location>
</feature>
<feature type="compositionally biased region" description="Low complexity" evidence="9">
    <location>
        <begin position="1652"/>
        <end position="1669"/>
    </location>
</feature>
<feature type="compositionally biased region" description="Acidic residues" evidence="9">
    <location>
        <begin position="1757"/>
        <end position="1774"/>
    </location>
</feature>
<feature type="active site" description="For beta-ketoacyl synthase activity" evidence="6">
    <location>
        <position position="555"/>
    </location>
</feature>
<feature type="active site" description="For beta-ketoacyl synthase activity" evidence="6">
    <location>
        <position position="690"/>
    </location>
</feature>
<feature type="active site" description="For beta-ketoacyl synthase activity" evidence="6">
    <location>
        <position position="735"/>
    </location>
</feature>
<feature type="active site" description="For acyl/malonyl transferase activity" evidence="8">
    <location>
        <position position="1021"/>
    </location>
</feature>
<feature type="active site" description="Proton acceptor; for dehydratase activity" evidence="7">
    <location>
        <position position="1356"/>
    </location>
</feature>
<feature type="active site" description="Proton donor; for dehydratase activity" evidence="7">
    <location>
        <position position="1546"/>
    </location>
</feature>
<feature type="active site" description="For thioesterase activity" evidence="1">
    <location>
        <position position="2009"/>
    </location>
</feature>
<feature type="modified residue" description="O-(pantetheine 4'-phosphoryl)serine" evidence="5">
    <location>
        <position position="1718"/>
    </location>
</feature>
<feature type="modified residue" description="O-(pantetheine 4'-phosphoryl)serine" evidence="5">
    <location>
        <position position="1834"/>
    </location>
</feature>